<reference key="1">
    <citation type="journal article" date="2000" name="Nature">
        <title>Sequence and analysis of chromosome 3 of the plant Arabidopsis thaliana.</title>
        <authorList>
            <person name="Salanoubat M."/>
            <person name="Lemcke K."/>
            <person name="Rieger M."/>
            <person name="Ansorge W."/>
            <person name="Unseld M."/>
            <person name="Fartmann B."/>
            <person name="Valle G."/>
            <person name="Bloecker H."/>
            <person name="Perez-Alonso M."/>
            <person name="Obermaier B."/>
            <person name="Delseny M."/>
            <person name="Boutry M."/>
            <person name="Grivell L.A."/>
            <person name="Mache R."/>
            <person name="Puigdomenech P."/>
            <person name="De Simone V."/>
            <person name="Choisne N."/>
            <person name="Artiguenave F."/>
            <person name="Robert C."/>
            <person name="Brottier P."/>
            <person name="Wincker P."/>
            <person name="Cattolico L."/>
            <person name="Weissenbach J."/>
            <person name="Saurin W."/>
            <person name="Quetier F."/>
            <person name="Schaefer M."/>
            <person name="Mueller-Auer S."/>
            <person name="Gabel C."/>
            <person name="Fuchs M."/>
            <person name="Benes V."/>
            <person name="Wurmbach E."/>
            <person name="Drzonek H."/>
            <person name="Erfle H."/>
            <person name="Jordan N."/>
            <person name="Bangert S."/>
            <person name="Wiedelmann R."/>
            <person name="Kranz H."/>
            <person name="Voss H."/>
            <person name="Holland R."/>
            <person name="Brandt P."/>
            <person name="Nyakatura G."/>
            <person name="Vezzi A."/>
            <person name="D'Angelo M."/>
            <person name="Pallavicini A."/>
            <person name="Toppo S."/>
            <person name="Simionati B."/>
            <person name="Conrad A."/>
            <person name="Hornischer K."/>
            <person name="Kauer G."/>
            <person name="Loehnert T.-H."/>
            <person name="Nordsiek G."/>
            <person name="Reichelt J."/>
            <person name="Scharfe M."/>
            <person name="Schoen O."/>
            <person name="Bargues M."/>
            <person name="Terol J."/>
            <person name="Climent J."/>
            <person name="Navarro P."/>
            <person name="Collado C."/>
            <person name="Perez-Perez A."/>
            <person name="Ottenwaelder B."/>
            <person name="Duchemin D."/>
            <person name="Cooke R."/>
            <person name="Laudie M."/>
            <person name="Berger-Llauro C."/>
            <person name="Purnelle B."/>
            <person name="Masuy D."/>
            <person name="de Haan M."/>
            <person name="Maarse A.C."/>
            <person name="Alcaraz J.-P."/>
            <person name="Cottet A."/>
            <person name="Casacuberta E."/>
            <person name="Monfort A."/>
            <person name="Argiriou A."/>
            <person name="Flores M."/>
            <person name="Liguori R."/>
            <person name="Vitale D."/>
            <person name="Mannhaupt G."/>
            <person name="Haase D."/>
            <person name="Schoof H."/>
            <person name="Rudd S."/>
            <person name="Zaccaria P."/>
            <person name="Mewes H.-W."/>
            <person name="Mayer K.F.X."/>
            <person name="Kaul S."/>
            <person name="Town C.D."/>
            <person name="Koo H.L."/>
            <person name="Tallon L.J."/>
            <person name="Jenkins J."/>
            <person name="Rooney T."/>
            <person name="Rizzo M."/>
            <person name="Walts A."/>
            <person name="Utterback T."/>
            <person name="Fujii C.Y."/>
            <person name="Shea T.P."/>
            <person name="Creasy T.H."/>
            <person name="Haas B."/>
            <person name="Maiti R."/>
            <person name="Wu D."/>
            <person name="Peterson J."/>
            <person name="Van Aken S."/>
            <person name="Pai G."/>
            <person name="Militscher J."/>
            <person name="Sellers P."/>
            <person name="Gill J.E."/>
            <person name="Feldblyum T.V."/>
            <person name="Preuss D."/>
            <person name="Lin X."/>
            <person name="Nierman W.C."/>
            <person name="Salzberg S.L."/>
            <person name="White O."/>
            <person name="Venter J.C."/>
            <person name="Fraser C.M."/>
            <person name="Kaneko T."/>
            <person name="Nakamura Y."/>
            <person name="Sato S."/>
            <person name="Kato T."/>
            <person name="Asamizu E."/>
            <person name="Sasamoto S."/>
            <person name="Kimura T."/>
            <person name="Idesawa K."/>
            <person name="Kawashima K."/>
            <person name="Kishida Y."/>
            <person name="Kiyokawa C."/>
            <person name="Kohara M."/>
            <person name="Matsumoto M."/>
            <person name="Matsuno A."/>
            <person name="Muraki A."/>
            <person name="Nakayama S."/>
            <person name="Nakazaki N."/>
            <person name="Shinpo S."/>
            <person name="Takeuchi C."/>
            <person name="Wada T."/>
            <person name="Watanabe A."/>
            <person name="Yamada M."/>
            <person name="Yasuda M."/>
            <person name="Tabata S."/>
        </authorList>
    </citation>
    <scope>NUCLEOTIDE SEQUENCE [LARGE SCALE GENOMIC DNA]</scope>
    <source>
        <strain>cv. Columbia</strain>
    </source>
</reference>
<reference key="2">
    <citation type="journal article" date="2017" name="Plant J.">
        <title>Araport11: a complete reannotation of the Arabidopsis thaliana reference genome.</title>
        <authorList>
            <person name="Cheng C.Y."/>
            <person name="Krishnakumar V."/>
            <person name="Chan A.P."/>
            <person name="Thibaud-Nissen F."/>
            <person name="Schobel S."/>
            <person name="Town C.D."/>
        </authorList>
    </citation>
    <scope>GENOME REANNOTATION</scope>
    <source>
        <strain>cv. Columbia</strain>
    </source>
</reference>
<reference key="3">
    <citation type="journal article" date="2003" name="Science">
        <title>Empirical analysis of transcriptional activity in the Arabidopsis genome.</title>
        <authorList>
            <person name="Yamada K."/>
            <person name="Lim J."/>
            <person name="Dale J.M."/>
            <person name="Chen H."/>
            <person name="Shinn P."/>
            <person name="Palm C.J."/>
            <person name="Southwick A.M."/>
            <person name="Wu H.C."/>
            <person name="Kim C.J."/>
            <person name="Nguyen M."/>
            <person name="Pham P.K."/>
            <person name="Cheuk R.F."/>
            <person name="Karlin-Newmann G."/>
            <person name="Liu S.X."/>
            <person name="Lam B."/>
            <person name="Sakano H."/>
            <person name="Wu T."/>
            <person name="Yu G."/>
            <person name="Miranda M."/>
            <person name="Quach H.L."/>
            <person name="Tripp M."/>
            <person name="Chang C.H."/>
            <person name="Lee J.M."/>
            <person name="Toriumi M.J."/>
            <person name="Chan M.M."/>
            <person name="Tang C.C."/>
            <person name="Onodera C.S."/>
            <person name="Deng J.M."/>
            <person name="Akiyama K."/>
            <person name="Ansari Y."/>
            <person name="Arakawa T."/>
            <person name="Banh J."/>
            <person name="Banno F."/>
            <person name="Bowser L."/>
            <person name="Brooks S.Y."/>
            <person name="Carninci P."/>
            <person name="Chao Q."/>
            <person name="Choy N."/>
            <person name="Enju A."/>
            <person name="Goldsmith A.D."/>
            <person name="Gurjal M."/>
            <person name="Hansen N.F."/>
            <person name="Hayashizaki Y."/>
            <person name="Johnson-Hopson C."/>
            <person name="Hsuan V.W."/>
            <person name="Iida K."/>
            <person name="Karnes M."/>
            <person name="Khan S."/>
            <person name="Koesema E."/>
            <person name="Ishida J."/>
            <person name="Jiang P.X."/>
            <person name="Jones T."/>
            <person name="Kawai J."/>
            <person name="Kamiya A."/>
            <person name="Meyers C."/>
            <person name="Nakajima M."/>
            <person name="Narusaka M."/>
            <person name="Seki M."/>
            <person name="Sakurai T."/>
            <person name="Satou M."/>
            <person name="Tamse R."/>
            <person name="Vaysberg M."/>
            <person name="Wallender E.K."/>
            <person name="Wong C."/>
            <person name="Yamamura Y."/>
            <person name="Yuan S."/>
            <person name="Shinozaki K."/>
            <person name="Davis R.W."/>
            <person name="Theologis A."/>
            <person name="Ecker J.R."/>
        </authorList>
    </citation>
    <scope>NUCLEOTIDE SEQUENCE [LARGE SCALE MRNA]</scope>
    <source>
        <strain>cv. Columbia</strain>
    </source>
</reference>
<reference key="4">
    <citation type="journal article" date="2013" name="FEBS J.">
        <title>Novel glyoxalases from Arabidopsis thaliana.</title>
        <authorList>
            <person name="Kwon K."/>
            <person name="Choi D."/>
            <person name="Hyun J.K."/>
            <person name="Jung H.S."/>
            <person name="Baek K."/>
            <person name="Park C."/>
        </authorList>
    </citation>
    <scope>FUNCTION</scope>
    <scope>BIOPHYSICOCHEMICAL PROPERTIES</scope>
    <scope>SUBUNIT</scope>
    <scope>MUTAGENESIS OF GLU-19; GLU-94; CYS-120; HIS-121; GLU-212; GLU-287; CYS-313 AND HIS-314</scope>
</reference>
<reference key="5">
    <citation type="journal article" date="2012" name="Acta Crystallogr. F">
        <title>Crystallization and preliminary X-ray data analysis of a DJ-1 homologue from Arabidopsis thaliana (AtDJ-1D).</title>
        <authorList>
            <person name="Seo K.H."/>
            <person name="Zhuang N."/>
            <person name="Cha J.Y."/>
            <person name="Son D."/>
            <person name="Lee K.H."/>
        </authorList>
    </citation>
    <scope>X-RAY CRYSTALLOGRAPHY (2.05 ANGSTROMS)</scope>
    <scope>OXIDATION AT CYS-120 AND CYS-313</scope>
</reference>
<evidence type="ECO:0000255" key="1">
    <source>
        <dbReference type="PROSITE-ProRule" id="PRU00608"/>
    </source>
</evidence>
<evidence type="ECO:0000269" key="2">
    <source>
    </source>
</evidence>
<evidence type="ECO:0000269" key="3">
    <source>
    </source>
</evidence>
<evidence type="ECO:0000305" key="4"/>
<evidence type="ECO:0000305" key="5">
    <source>
    </source>
</evidence>
<evidence type="ECO:0007829" key="6">
    <source>
        <dbReference type="PDB" id="3UK7"/>
    </source>
</evidence>
<evidence type="ECO:0007829" key="7">
    <source>
        <dbReference type="PDB" id="4OGG"/>
    </source>
</evidence>
<dbReference type="EC" id="4.4.1.5"/>
<dbReference type="EMBL" id="AC018363">
    <property type="protein sequence ID" value="AAF26988.1"/>
    <property type="molecule type" value="Genomic_DNA"/>
</dbReference>
<dbReference type="EMBL" id="CP002686">
    <property type="protein sequence ID" value="AEE73851.1"/>
    <property type="molecule type" value="Genomic_DNA"/>
</dbReference>
<dbReference type="EMBL" id="AF360323">
    <property type="protein sequence ID" value="AAK26033.2"/>
    <property type="molecule type" value="mRNA"/>
</dbReference>
<dbReference type="EMBL" id="BT000947">
    <property type="protein sequence ID" value="AAN41347.1"/>
    <property type="molecule type" value="mRNA"/>
</dbReference>
<dbReference type="RefSeq" id="NP_186921.1">
    <property type="nucleotide sequence ID" value="NM_111140.5"/>
</dbReference>
<dbReference type="PDB" id="3UK7">
    <property type="method" value="X-ray"/>
    <property type="resolution" value="2.05 A"/>
    <property type="chains" value="A/B/C=1-388"/>
</dbReference>
<dbReference type="PDB" id="4OFW">
    <property type="method" value="X-ray"/>
    <property type="resolution" value="2.30 A"/>
    <property type="chains" value="A/B/C/D/E/F=3-388"/>
</dbReference>
<dbReference type="PDB" id="4OGG">
    <property type="method" value="X-ray"/>
    <property type="resolution" value="1.60 A"/>
    <property type="chains" value="A/B/C=3-388"/>
</dbReference>
<dbReference type="PDBsum" id="3UK7"/>
<dbReference type="PDBsum" id="4OFW"/>
<dbReference type="PDBsum" id="4OGG"/>
<dbReference type="SMR" id="Q9M8R4"/>
<dbReference type="FunCoup" id="Q9M8R4">
    <property type="interactions" value="714"/>
</dbReference>
<dbReference type="STRING" id="3702.Q9M8R4"/>
<dbReference type="MEROPS" id="C56.A01"/>
<dbReference type="PaxDb" id="3702-AT3G02720.1"/>
<dbReference type="ProteomicsDB" id="224062"/>
<dbReference type="EnsemblPlants" id="AT3G02720.1">
    <property type="protein sequence ID" value="AT3G02720.1"/>
    <property type="gene ID" value="AT3G02720"/>
</dbReference>
<dbReference type="GeneID" id="820875"/>
<dbReference type="Gramene" id="AT3G02720.1">
    <property type="protein sequence ID" value="AT3G02720.1"/>
    <property type="gene ID" value="AT3G02720"/>
</dbReference>
<dbReference type="KEGG" id="ath:AT3G02720"/>
<dbReference type="Araport" id="AT3G02720"/>
<dbReference type="TAIR" id="AT3G02720">
    <property type="gene designation" value="DJ1D"/>
</dbReference>
<dbReference type="eggNOG" id="KOG2764">
    <property type="taxonomic scope" value="Eukaryota"/>
</dbReference>
<dbReference type="HOGENOM" id="CLU_000445_44_3_1"/>
<dbReference type="InParanoid" id="Q9M8R4"/>
<dbReference type="OMA" id="WIEPETM"/>
<dbReference type="PhylomeDB" id="Q9M8R4"/>
<dbReference type="EvolutionaryTrace" id="Q9M8R4"/>
<dbReference type="PRO" id="PR:Q9M8R4"/>
<dbReference type="Proteomes" id="UP000006548">
    <property type="component" value="Chromosome 3"/>
</dbReference>
<dbReference type="ExpressionAtlas" id="Q9M8R4">
    <property type="expression patterns" value="baseline and differential"/>
</dbReference>
<dbReference type="GO" id="GO:0005829">
    <property type="term" value="C:cytosol"/>
    <property type="evidence" value="ECO:0007005"/>
    <property type="project" value="TAIR"/>
</dbReference>
<dbReference type="GO" id="GO:0019172">
    <property type="term" value="F:glyoxalase III activity"/>
    <property type="evidence" value="ECO:0000314"/>
    <property type="project" value="TAIR"/>
</dbReference>
<dbReference type="GO" id="GO:0004462">
    <property type="term" value="F:lactoylglutathione lyase activity"/>
    <property type="evidence" value="ECO:0007669"/>
    <property type="project" value="UniProtKB-EC"/>
</dbReference>
<dbReference type="CDD" id="cd03169">
    <property type="entry name" value="GATase1_PfpI_1"/>
    <property type="match status" value="2"/>
</dbReference>
<dbReference type="FunFam" id="3.40.50.880:FF:000063">
    <property type="entry name" value="Protein DJ-1 homolog D"/>
    <property type="match status" value="1"/>
</dbReference>
<dbReference type="Gene3D" id="3.40.50.880">
    <property type="match status" value="2"/>
</dbReference>
<dbReference type="InterPro" id="IPR006286">
    <property type="entry name" value="C56_PfpI-like"/>
</dbReference>
<dbReference type="InterPro" id="IPR029062">
    <property type="entry name" value="Class_I_gatase-like"/>
</dbReference>
<dbReference type="InterPro" id="IPR002818">
    <property type="entry name" value="DJ-1/PfpI"/>
</dbReference>
<dbReference type="NCBIfam" id="TIGR01382">
    <property type="entry name" value="PfpI"/>
    <property type="match status" value="2"/>
</dbReference>
<dbReference type="PANTHER" id="PTHR42733">
    <property type="entry name" value="DJ-1 PROTEIN"/>
    <property type="match status" value="1"/>
</dbReference>
<dbReference type="PANTHER" id="PTHR42733:SF2">
    <property type="entry name" value="DJ-1_THIJ_PFPI FAMILY PROTEIN"/>
    <property type="match status" value="1"/>
</dbReference>
<dbReference type="Pfam" id="PF01965">
    <property type="entry name" value="DJ-1_PfpI"/>
    <property type="match status" value="2"/>
</dbReference>
<dbReference type="SUPFAM" id="SSF52317">
    <property type="entry name" value="Class I glutamine amidotransferase-like"/>
    <property type="match status" value="2"/>
</dbReference>
<dbReference type="PROSITE" id="PS51276">
    <property type="entry name" value="PEPTIDASE_C56_PFPI"/>
    <property type="match status" value="2"/>
</dbReference>
<proteinExistence type="evidence at protein level"/>
<keyword id="KW-0002">3D-structure</keyword>
<keyword id="KW-0456">Lyase</keyword>
<keyword id="KW-0558">Oxidation</keyword>
<keyword id="KW-1185">Reference proteome</keyword>
<keyword id="KW-0677">Repeat</keyword>
<keyword id="KW-0346">Stress response</keyword>
<sequence>MANSRTVLILCGDYMEDYEVMVPFQALQAFGITVHTVCPGKKAGDSCPTAVHDFCGHQTYFESRGHNFTLNATFDEVDLSKYDGLVIPGGRAPEYLALTASVVELVKEFSRSGKPIASICHGQLILAAADTVNGRKCTAYATVGPSLVAAGAKWVEPITPDVCVVDGSLITAATYEGHPEFIQLFVKALGGKITGANKRILFLCGDYMEDYEVKVPFQSLQALGCQVDAVCPEKKAGDRCPTAIHDFEGDQTYSEKPGHTFALTTNFDDLVSSSYDALVIPGGRAPEYLALNEHVLNIVKEFMNSEKPVASICHGQQILAAAGVLKGRKCTAYPAVKLNVVLGGGTWLEPDPIDRCFTDGNLVTGAAWPGHPEFVSQLMALLGIQVSF</sequence>
<comment type="function">
    <text evidence="3">Possesses glyoxalase I activity. Catalyzes the conversion of hemimercaptal, formed from methylglyoxal and glutathione, to S-lactoylglutathione. May be involved in oxidative stress response.</text>
</comment>
<comment type="catalytic activity">
    <reaction>
        <text>(R)-S-lactoylglutathione = methylglyoxal + glutathione</text>
        <dbReference type="Rhea" id="RHEA:19069"/>
        <dbReference type="ChEBI" id="CHEBI:17158"/>
        <dbReference type="ChEBI" id="CHEBI:57474"/>
        <dbReference type="ChEBI" id="CHEBI:57925"/>
        <dbReference type="EC" id="4.4.1.5"/>
    </reaction>
</comment>
<comment type="biophysicochemical properties">
    <kinetics>
        <KM evidence="3">0.1 mM for methylglyoxal</KM>
        <KM evidence="3">0.27 mM for glutathione</KM>
        <text>kcat is 1700 min(-1) with methylglyoxal as substrate. kcat is 2200 min(-1) with glutathione as substrate.</text>
    </kinetics>
    <phDependence>
        <text evidence="3">Optimum pH is 6.8.</text>
    </phDependence>
    <temperatureDependence>
        <text evidence="3">Optimum temperature is 45 degrees Celsius.</text>
    </temperatureDependence>
</comment>
<comment type="subunit">
    <text evidence="5">Homotrimer.</text>
</comment>
<comment type="PTM">
    <text evidence="2">Cys-120 and Cys-313 are oxidized to sulfinic acid.</text>
</comment>
<comment type="similarity">
    <text evidence="4">Belongs to the peptidase C56 family.</text>
</comment>
<feature type="chain" id="PRO_0000421816" description="Protein DJ-1 homolog D">
    <location>
        <begin position="1"/>
        <end position="388"/>
    </location>
</feature>
<feature type="domain" description="PfpI endopeptidase 1" evidence="1">
    <location>
        <begin position="5"/>
        <end position="190"/>
    </location>
</feature>
<feature type="domain" description="PfpI endopeptidase 2" evidence="1">
    <location>
        <begin position="198"/>
        <end position="383"/>
    </location>
</feature>
<feature type="active site" description="Nucleophile" evidence="1">
    <location>
        <position position="120"/>
    </location>
</feature>
<feature type="active site" evidence="1">
    <location>
        <position position="121"/>
    </location>
</feature>
<feature type="active site" description="Nucleophile" evidence="1">
    <location>
        <position position="313"/>
    </location>
</feature>
<feature type="active site" evidence="1">
    <location>
        <position position="314"/>
    </location>
</feature>
<feature type="modified residue" description="Cysteine sulfenic acid (-SOH)" evidence="2">
    <location>
        <position position="120"/>
    </location>
</feature>
<feature type="modified residue" description="Cysteine sulfinic acid (-SO2H)" evidence="2">
    <location>
        <position position="313"/>
    </location>
</feature>
<feature type="mutagenesis site" description="Reduces catalytic activity 1.5-fold. Almost abolishes catalytic activity; when associated with A-212." evidence="3">
    <original>E</original>
    <variation>A</variation>
    <location>
        <position position="19"/>
    </location>
</feature>
<feature type="mutagenesis site" description="Reduces catalytic activity 10-fold. Almost abolishes catalytic activity; when associated with A-287." evidence="3">
    <original>E</original>
    <variation>A</variation>
    <location>
        <position position="94"/>
    </location>
</feature>
<feature type="mutagenesis site" description="Reduces catalytic activity 2-fold. Abolishes catalytic activity; when associated with A-313." evidence="3">
    <original>C</original>
    <variation>A</variation>
    <location>
        <position position="120"/>
    </location>
</feature>
<feature type="mutagenesis site" description="Reduces catalytic activity 3-fold. Almost abolishes catalytic activity; when associated with A-314." evidence="3">
    <original>H</original>
    <variation>A</variation>
    <location>
        <position position="121"/>
    </location>
</feature>
<feature type="mutagenesis site" description="Reduces catalytic activity 2-fold. Almost abolishes catalytic activity; when associated with A-19." evidence="3">
    <original>E</original>
    <variation>A</variation>
    <location>
        <position position="212"/>
    </location>
</feature>
<feature type="mutagenesis site" description="Reduces catalytic activity 6-fold. Almost abolishes catalytic activity; when associated with A-94." evidence="3">
    <original>E</original>
    <variation>A</variation>
    <location>
        <position position="287"/>
    </location>
</feature>
<feature type="mutagenesis site" description="Reduces catalytic activity 2-fold. Abolishes catalytic activity; when associated with A-120." evidence="3">
    <original>C</original>
    <variation>A</variation>
    <location>
        <position position="313"/>
    </location>
</feature>
<feature type="mutagenesis site" description="Reduces catalytic activity 3-fold. Almost abolishes catalytic activity; when associated with A-121." evidence="3">
    <original>H</original>
    <variation>A</variation>
    <location>
        <position position="314"/>
    </location>
</feature>
<feature type="strand" evidence="7">
    <location>
        <begin position="6"/>
        <end position="10"/>
    </location>
</feature>
<feature type="helix" evidence="7">
    <location>
        <begin position="17"/>
        <end position="29"/>
    </location>
</feature>
<feature type="strand" evidence="7">
    <location>
        <begin position="33"/>
        <end position="37"/>
    </location>
</feature>
<feature type="strand" evidence="7">
    <location>
        <begin position="49"/>
        <end position="53"/>
    </location>
</feature>
<feature type="strand" evidence="7">
    <location>
        <begin position="56"/>
        <end position="59"/>
    </location>
</feature>
<feature type="strand" evidence="7">
    <location>
        <begin position="61"/>
        <end position="64"/>
    </location>
</feature>
<feature type="helix" evidence="7">
    <location>
        <begin position="74"/>
        <end position="76"/>
    </location>
</feature>
<feature type="helix" evidence="7">
    <location>
        <begin position="79"/>
        <end position="81"/>
    </location>
</feature>
<feature type="strand" evidence="7">
    <location>
        <begin position="83"/>
        <end position="87"/>
    </location>
</feature>
<feature type="helix" evidence="7">
    <location>
        <begin position="92"/>
        <end position="96"/>
    </location>
</feature>
<feature type="helix" evidence="7">
    <location>
        <begin position="100"/>
        <end position="111"/>
    </location>
</feature>
<feature type="strand" evidence="7">
    <location>
        <begin position="116"/>
        <end position="118"/>
    </location>
</feature>
<feature type="turn" evidence="6">
    <location>
        <begin position="120"/>
        <end position="122"/>
    </location>
</feature>
<feature type="helix" evidence="7">
    <location>
        <begin position="123"/>
        <end position="128"/>
    </location>
</feature>
<feature type="helix" evidence="7">
    <location>
        <begin position="141"/>
        <end position="143"/>
    </location>
</feature>
<feature type="helix" evidence="7">
    <location>
        <begin position="144"/>
        <end position="149"/>
    </location>
</feature>
<feature type="strand" evidence="7">
    <location>
        <begin position="163"/>
        <end position="166"/>
    </location>
</feature>
<feature type="strand" evidence="7">
    <location>
        <begin position="169"/>
        <end position="174"/>
    </location>
</feature>
<feature type="helix" evidence="7">
    <location>
        <begin position="175"/>
        <end position="177"/>
    </location>
</feature>
<feature type="helix" evidence="7">
    <location>
        <begin position="178"/>
        <end position="188"/>
    </location>
</feature>
<feature type="strand" evidence="7">
    <location>
        <begin position="192"/>
        <end position="195"/>
    </location>
</feature>
<feature type="strand" evidence="7">
    <location>
        <begin position="199"/>
        <end position="203"/>
    </location>
</feature>
<feature type="helix" evidence="7">
    <location>
        <begin position="210"/>
        <end position="223"/>
    </location>
</feature>
<feature type="strand" evidence="7">
    <location>
        <begin position="226"/>
        <end position="230"/>
    </location>
</feature>
<feature type="strand" evidence="7">
    <location>
        <begin position="242"/>
        <end position="246"/>
    </location>
</feature>
<feature type="strand" evidence="7">
    <location>
        <begin position="249"/>
        <end position="252"/>
    </location>
</feature>
<feature type="strand" evidence="7">
    <location>
        <begin position="254"/>
        <end position="257"/>
    </location>
</feature>
<feature type="turn" evidence="7">
    <location>
        <begin position="267"/>
        <end position="269"/>
    </location>
</feature>
<feature type="helix" evidence="7">
    <location>
        <begin position="272"/>
        <end position="274"/>
    </location>
</feature>
<feature type="strand" evidence="7">
    <location>
        <begin position="276"/>
        <end position="280"/>
    </location>
</feature>
<feature type="helix" evidence="7">
    <location>
        <begin position="285"/>
        <end position="289"/>
    </location>
</feature>
<feature type="helix" evidence="7">
    <location>
        <begin position="293"/>
        <end position="304"/>
    </location>
</feature>
<feature type="strand" evidence="7">
    <location>
        <begin position="309"/>
        <end position="311"/>
    </location>
</feature>
<feature type="helix" evidence="6">
    <location>
        <begin position="313"/>
        <end position="315"/>
    </location>
</feature>
<feature type="helix" evidence="7">
    <location>
        <begin position="316"/>
        <end position="322"/>
    </location>
</feature>
<feature type="turn" evidence="7">
    <location>
        <begin position="323"/>
        <end position="327"/>
    </location>
</feature>
<feature type="helix" evidence="7">
    <location>
        <begin position="334"/>
        <end position="336"/>
    </location>
</feature>
<feature type="helix" evidence="7">
    <location>
        <begin position="337"/>
        <end position="342"/>
    </location>
</feature>
<feature type="strand" evidence="7">
    <location>
        <begin position="357"/>
        <end position="359"/>
    </location>
</feature>
<feature type="strand" evidence="7">
    <location>
        <begin position="362"/>
        <end position="364"/>
    </location>
</feature>
<feature type="helix" evidence="7">
    <location>
        <begin position="368"/>
        <end position="370"/>
    </location>
</feature>
<feature type="helix" evidence="7">
    <location>
        <begin position="371"/>
        <end position="382"/>
    </location>
</feature>
<feature type="strand" evidence="7">
    <location>
        <begin position="385"/>
        <end position="387"/>
    </location>
</feature>
<gene>
    <name type="primary">DJ1D</name>
    <name type="ordered locus">At3g02720</name>
    <name type="ORF">F13E7.34</name>
</gene>
<organism>
    <name type="scientific">Arabidopsis thaliana</name>
    <name type="common">Mouse-ear cress</name>
    <dbReference type="NCBI Taxonomy" id="3702"/>
    <lineage>
        <taxon>Eukaryota</taxon>
        <taxon>Viridiplantae</taxon>
        <taxon>Streptophyta</taxon>
        <taxon>Embryophyta</taxon>
        <taxon>Tracheophyta</taxon>
        <taxon>Spermatophyta</taxon>
        <taxon>Magnoliopsida</taxon>
        <taxon>eudicotyledons</taxon>
        <taxon>Gunneridae</taxon>
        <taxon>Pentapetalae</taxon>
        <taxon>rosids</taxon>
        <taxon>malvids</taxon>
        <taxon>Brassicales</taxon>
        <taxon>Brassicaceae</taxon>
        <taxon>Camelineae</taxon>
        <taxon>Arabidopsis</taxon>
    </lineage>
</organism>
<protein>
    <recommendedName>
        <fullName>Protein DJ-1 homolog D</fullName>
        <shortName>AtDJ1D</shortName>
    </recommendedName>
    <alternativeName>
        <fullName>Lactoylglutathione lyase DJ1D</fullName>
        <ecNumber>4.4.1.5</ecNumber>
    </alternativeName>
</protein>
<name>DJ1D_ARATH</name>
<accession>Q9M8R4</accession>
<accession>Q9C5D5</accession>